<feature type="chain" id="PRO_1000096172" description="Elongation factor P">
    <location>
        <begin position="1"/>
        <end position="185"/>
    </location>
</feature>
<sequence length="185" mass="20667">MISVNDFRTGLTIVVDGQLYRVLDFQHVKPGKGAAFVRSKLRNLRNGSVNDKTFRAGEKVEKAQIDNRKMQYLYAQGDEHVFMDLESYEQTELASSAIEYELKFLKENMEVHIQSYQGEMLGVELPNTVQLEVTETEPGIKGDTASGGTKPATLETGLIVQVPFFVNQGDVLIINTEEGSYVSRA</sequence>
<keyword id="KW-0963">Cytoplasm</keyword>
<keyword id="KW-0251">Elongation factor</keyword>
<keyword id="KW-0648">Protein biosynthesis</keyword>
<name>EFP_LYSSC</name>
<protein>
    <recommendedName>
        <fullName evidence="1">Elongation factor P</fullName>
        <shortName evidence="1">EF-P</shortName>
    </recommendedName>
</protein>
<gene>
    <name evidence="1" type="primary">efp</name>
    <name type="ordered locus">Bsph_3545</name>
</gene>
<evidence type="ECO:0000255" key="1">
    <source>
        <dbReference type="HAMAP-Rule" id="MF_00141"/>
    </source>
</evidence>
<organism>
    <name type="scientific">Lysinibacillus sphaericus (strain C3-41)</name>
    <dbReference type="NCBI Taxonomy" id="444177"/>
    <lineage>
        <taxon>Bacteria</taxon>
        <taxon>Bacillati</taxon>
        <taxon>Bacillota</taxon>
        <taxon>Bacilli</taxon>
        <taxon>Bacillales</taxon>
        <taxon>Bacillaceae</taxon>
        <taxon>Lysinibacillus</taxon>
    </lineage>
</organism>
<dbReference type="EMBL" id="CP000817">
    <property type="protein sequence ID" value="ACA41033.1"/>
    <property type="molecule type" value="Genomic_DNA"/>
</dbReference>
<dbReference type="RefSeq" id="WP_012295092.1">
    <property type="nucleotide sequence ID" value="NC_010382.1"/>
</dbReference>
<dbReference type="SMR" id="B1HS10"/>
<dbReference type="EnsemblBacteria" id="ACA41033">
    <property type="protein sequence ID" value="ACA41033"/>
    <property type="gene ID" value="Bsph_3545"/>
</dbReference>
<dbReference type="KEGG" id="lsp:Bsph_3545"/>
<dbReference type="HOGENOM" id="CLU_074944_0_1_9"/>
<dbReference type="UniPathway" id="UPA00345"/>
<dbReference type="Proteomes" id="UP000002164">
    <property type="component" value="Chromosome"/>
</dbReference>
<dbReference type="GO" id="GO:0005737">
    <property type="term" value="C:cytoplasm"/>
    <property type="evidence" value="ECO:0007669"/>
    <property type="project" value="UniProtKB-SubCell"/>
</dbReference>
<dbReference type="GO" id="GO:0003746">
    <property type="term" value="F:translation elongation factor activity"/>
    <property type="evidence" value="ECO:0007669"/>
    <property type="project" value="UniProtKB-UniRule"/>
</dbReference>
<dbReference type="GO" id="GO:0043043">
    <property type="term" value="P:peptide biosynthetic process"/>
    <property type="evidence" value="ECO:0007669"/>
    <property type="project" value="InterPro"/>
</dbReference>
<dbReference type="CDD" id="cd04470">
    <property type="entry name" value="S1_EF-P_repeat_1"/>
    <property type="match status" value="1"/>
</dbReference>
<dbReference type="CDD" id="cd05794">
    <property type="entry name" value="S1_EF-P_repeat_2"/>
    <property type="match status" value="1"/>
</dbReference>
<dbReference type="FunFam" id="2.30.30.30:FF:000003">
    <property type="entry name" value="Elongation factor P"/>
    <property type="match status" value="1"/>
</dbReference>
<dbReference type="FunFam" id="2.40.50.140:FF:000004">
    <property type="entry name" value="Elongation factor P"/>
    <property type="match status" value="1"/>
</dbReference>
<dbReference type="FunFam" id="2.40.50.140:FF:000009">
    <property type="entry name" value="Elongation factor P"/>
    <property type="match status" value="1"/>
</dbReference>
<dbReference type="Gene3D" id="2.30.30.30">
    <property type="match status" value="1"/>
</dbReference>
<dbReference type="Gene3D" id="2.40.50.140">
    <property type="entry name" value="Nucleic acid-binding proteins"/>
    <property type="match status" value="2"/>
</dbReference>
<dbReference type="HAMAP" id="MF_00141">
    <property type="entry name" value="EF_P"/>
    <property type="match status" value="1"/>
</dbReference>
<dbReference type="InterPro" id="IPR015365">
    <property type="entry name" value="Elong-fact-P_C"/>
</dbReference>
<dbReference type="InterPro" id="IPR012340">
    <property type="entry name" value="NA-bd_OB-fold"/>
</dbReference>
<dbReference type="InterPro" id="IPR014722">
    <property type="entry name" value="Rib_uL2_dom2"/>
</dbReference>
<dbReference type="InterPro" id="IPR020599">
    <property type="entry name" value="Transl_elong_fac_P/YeiP"/>
</dbReference>
<dbReference type="InterPro" id="IPR013185">
    <property type="entry name" value="Transl_elong_KOW-like"/>
</dbReference>
<dbReference type="InterPro" id="IPR001059">
    <property type="entry name" value="Transl_elong_P/YeiP_cen"/>
</dbReference>
<dbReference type="InterPro" id="IPR013852">
    <property type="entry name" value="Transl_elong_P/YeiP_CS"/>
</dbReference>
<dbReference type="InterPro" id="IPR011768">
    <property type="entry name" value="Transl_elongation_fac_P"/>
</dbReference>
<dbReference type="InterPro" id="IPR008991">
    <property type="entry name" value="Translation_prot_SH3-like_sf"/>
</dbReference>
<dbReference type="NCBIfam" id="TIGR00038">
    <property type="entry name" value="efp"/>
    <property type="match status" value="1"/>
</dbReference>
<dbReference type="NCBIfam" id="NF001810">
    <property type="entry name" value="PRK00529.1"/>
    <property type="match status" value="1"/>
</dbReference>
<dbReference type="PANTHER" id="PTHR30053">
    <property type="entry name" value="ELONGATION FACTOR P"/>
    <property type="match status" value="1"/>
</dbReference>
<dbReference type="PANTHER" id="PTHR30053:SF12">
    <property type="entry name" value="ELONGATION FACTOR P (EF-P) FAMILY PROTEIN"/>
    <property type="match status" value="1"/>
</dbReference>
<dbReference type="Pfam" id="PF01132">
    <property type="entry name" value="EFP"/>
    <property type="match status" value="1"/>
</dbReference>
<dbReference type="Pfam" id="PF08207">
    <property type="entry name" value="EFP_N"/>
    <property type="match status" value="1"/>
</dbReference>
<dbReference type="Pfam" id="PF09285">
    <property type="entry name" value="Elong-fact-P_C"/>
    <property type="match status" value="1"/>
</dbReference>
<dbReference type="PIRSF" id="PIRSF005901">
    <property type="entry name" value="EF-P"/>
    <property type="match status" value="1"/>
</dbReference>
<dbReference type="SMART" id="SM01185">
    <property type="entry name" value="EFP"/>
    <property type="match status" value="1"/>
</dbReference>
<dbReference type="SMART" id="SM00841">
    <property type="entry name" value="Elong-fact-P_C"/>
    <property type="match status" value="1"/>
</dbReference>
<dbReference type="SUPFAM" id="SSF50249">
    <property type="entry name" value="Nucleic acid-binding proteins"/>
    <property type="match status" value="2"/>
</dbReference>
<dbReference type="SUPFAM" id="SSF50104">
    <property type="entry name" value="Translation proteins SH3-like domain"/>
    <property type="match status" value="1"/>
</dbReference>
<dbReference type="PROSITE" id="PS01275">
    <property type="entry name" value="EFP"/>
    <property type="match status" value="1"/>
</dbReference>
<proteinExistence type="inferred from homology"/>
<comment type="function">
    <text evidence="1">Involved in peptide bond synthesis. Stimulates efficient translation and peptide-bond synthesis on native or reconstituted 70S ribosomes in vitro. Probably functions indirectly by altering the affinity of the ribosome for aminoacyl-tRNA, thus increasing their reactivity as acceptors for peptidyl transferase.</text>
</comment>
<comment type="pathway">
    <text evidence="1">Protein biosynthesis; polypeptide chain elongation.</text>
</comment>
<comment type="subcellular location">
    <subcellularLocation>
        <location evidence="1">Cytoplasm</location>
    </subcellularLocation>
</comment>
<comment type="similarity">
    <text evidence="1">Belongs to the elongation factor P family.</text>
</comment>
<accession>B1HS10</accession>
<reference key="1">
    <citation type="journal article" date="2008" name="J. Bacteriol.">
        <title>Complete genome sequence of the mosquitocidal bacterium Bacillus sphaericus C3-41 and comparison with those of closely related Bacillus species.</title>
        <authorList>
            <person name="Hu X."/>
            <person name="Fan W."/>
            <person name="Han B."/>
            <person name="Liu H."/>
            <person name="Zheng D."/>
            <person name="Li Q."/>
            <person name="Dong W."/>
            <person name="Yan J."/>
            <person name="Gao M."/>
            <person name="Berry C."/>
            <person name="Yuan Z."/>
        </authorList>
    </citation>
    <scope>NUCLEOTIDE SEQUENCE [LARGE SCALE GENOMIC DNA]</scope>
    <source>
        <strain>C3-41</strain>
    </source>
</reference>